<feature type="chain" id="PRO_0000067187" description="Putative ankyrin repeat protein L715">
    <location>
        <begin position="1"/>
        <end position="275"/>
    </location>
</feature>
<feature type="repeat" description="ANK 1">
    <location>
        <begin position="94"/>
        <end position="123"/>
    </location>
</feature>
<feature type="repeat" description="ANK 2">
    <location>
        <begin position="124"/>
        <end position="153"/>
    </location>
</feature>
<feature type="repeat" description="ANK 3">
    <location>
        <begin position="155"/>
        <end position="183"/>
    </location>
</feature>
<feature type="repeat" description="ANK 4">
    <location>
        <begin position="184"/>
        <end position="213"/>
    </location>
</feature>
<feature type="region of interest" description="Disordered" evidence="1">
    <location>
        <begin position="253"/>
        <end position="275"/>
    </location>
</feature>
<feature type="compositionally biased region" description="Acidic residues" evidence="1">
    <location>
        <begin position="255"/>
        <end position="275"/>
    </location>
</feature>
<name>YL715_MIMIV</name>
<accession>Q5UNX2</accession>
<organism>
    <name type="scientific">Acanthamoeba polyphaga mimivirus</name>
    <name type="common">APMV</name>
    <dbReference type="NCBI Taxonomy" id="212035"/>
    <lineage>
        <taxon>Viruses</taxon>
        <taxon>Varidnaviria</taxon>
        <taxon>Bamfordvirae</taxon>
        <taxon>Nucleocytoviricota</taxon>
        <taxon>Megaviricetes</taxon>
        <taxon>Imitervirales</taxon>
        <taxon>Mimiviridae</taxon>
        <taxon>Megamimivirinae</taxon>
        <taxon>Mimivirus</taxon>
        <taxon>Mimivirus bradfordmassiliense</taxon>
    </lineage>
</organism>
<keyword id="KW-0040">ANK repeat</keyword>
<keyword id="KW-1185">Reference proteome</keyword>
<keyword id="KW-0677">Repeat</keyword>
<dbReference type="EMBL" id="AY653733">
    <property type="protein sequence ID" value="AAV50975.1"/>
    <property type="molecule type" value="Genomic_DNA"/>
</dbReference>
<dbReference type="SMR" id="Q5UNX2"/>
<dbReference type="KEGG" id="vg:9925369"/>
<dbReference type="Proteomes" id="UP000001134">
    <property type="component" value="Genome"/>
</dbReference>
<dbReference type="Gene3D" id="1.25.40.20">
    <property type="entry name" value="Ankyrin repeat-containing domain"/>
    <property type="match status" value="1"/>
</dbReference>
<dbReference type="InterPro" id="IPR002110">
    <property type="entry name" value="Ankyrin_rpt"/>
</dbReference>
<dbReference type="InterPro" id="IPR036770">
    <property type="entry name" value="Ankyrin_rpt-contain_sf"/>
</dbReference>
<dbReference type="InterPro" id="IPR051165">
    <property type="entry name" value="Multifunctional_ANK_Repeat"/>
</dbReference>
<dbReference type="PANTHER" id="PTHR24123">
    <property type="entry name" value="ANKYRIN REPEAT-CONTAINING"/>
    <property type="match status" value="1"/>
</dbReference>
<dbReference type="PANTHER" id="PTHR24123:SF33">
    <property type="entry name" value="PROTEIN HOS4"/>
    <property type="match status" value="1"/>
</dbReference>
<dbReference type="Pfam" id="PF12796">
    <property type="entry name" value="Ank_2"/>
    <property type="match status" value="1"/>
</dbReference>
<dbReference type="SMART" id="SM00248">
    <property type="entry name" value="ANK"/>
    <property type="match status" value="4"/>
</dbReference>
<dbReference type="SUPFAM" id="SSF48403">
    <property type="entry name" value="Ankyrin repeat"/>
    <property type="match status" value="1"/>
</dbReference>
<dbReference type="PROSITE" id="PS50297">
    <property type="entry name" value="ANK_REP_REGION"/>
    <property type="match status" value="1"/>
</dbReference>
<dbReference type="PROSITE" id="PS50088">
    <property type="entry name" value="ANK_REPEAT"/>
    <property type="match status" value="2"/>
</dbReference>
<organismHost>
    <name type="scientific">Acanthamoeba polyphaga</name>
    <name type="common">Amoeba</name>
    <dbReference type="NCBI Taxonomy" id="5757"/>
</organismHost>
<protein>
    <recommendedName>
        <fullName>Putative ankyrin repeat protein L715</fullName>
    </recommendedName>
</protein>
<gene>
    <name type="ordered locus">MIMI_L715</name>
</gene>
<proteinExistence type="predicted"/>
<reference key="1">
    <citation type="journal article" date="2004" name="Science">
        <title>The 1.2-megabase genome sequence of Mimivirus.</title>
        <authorList>
            <person name="Raoult D."/>
            <person name="Audic S."/>
            <person name="Robert C."/>
            <person name="Abergel C."/>
            <person name="Renesto P."/>
            <person name="Ogata H."/>
            <person name="La Scola B."/>
            <person name="Susan M."/>
            <person name="Claverie J.-M."/>
        </authorList>
    </citation>
    <scope>NUCLEOTIDE SEQUENCE [LARGE SCALE GENOMIC DNA]</scope>
    <source>
        <strain>Rowbotham-Bradford</strain>
    </source>
</reference>
<evidence type="ECO:0000256" key="1">
    <source>
        <dbReference type="SAM" id="MobiDB-lite"/>
    </source>
</evidence>
<sequence>MVGANIYNTHNIHDPNNLNNLNNINNPNNITNNMHNPHNIFQNNYFDPKQLKILVDNMTPQDLELLLTLSCKKGIIRDVEYILCRIMREMINININYGLCQAIENYHLKIVELLIDHGADINYNNGLPLNLAVKNGYYDIIELLIEKKVNTNDNIFQLLTHCCQNNLPNSLRILLKENISIDPIYSTMVNLCLDNGYAECASILINHNNSDSTINSESMIHDTNLTTSQTLLELDDLLELDDLLDGNDYFNYNQDESDVGDDAENDIENDIEDDN</sequence>